<comment type="function">
    <text evidence="1">Converts 2-succinyl-6-hydroxy-2,4-cyclohexadiene-1-carboxylate (SHCHC) to 2-succinylbenzoate (OSB).</text>
</comment>
<comment type="catalytic activity">
    <reaction evidence="1">
        <text>(1R,6R)-6-hydroxy-2-succinyl-cyclohexa-2,4-diene-1-carboxylate = 2-succinylbenzoate + H2O</text>
        <dbReference type="Rhea" id="RHEA:10196"/>
        <dbReference type="ChEBI" id="CHEBI:15377"/>
        <dbReference type="ChEBI" id="CHEBI:18325"/>
        <dbReference type="ChEBI" id="CHEBI:58689"/>
        <dbReference type="EC" id="4.2.1.113"/>
    </reaction>
</comment>
<comment type="cofactor">
    <cofactor evidence="1">
        <name>a divalent metal cation</name>
        <dbReference type="ChEBI" id="CHEBI:60240"/>
    </cofactor>
</comment>
<comment type="pathway">
    <text evidence="1">Quinol/quinone metabolism; 1,4-dihydroxy-2-naphthoate biosynthesis; 1,4-dihydroxy-2-naphthoate from chorismate: step 4/7.</text>
</comment>
<comment type="pathway">
    <text evidence="1">Quinol/quinone metabolism; menaquinone biosynthesis.</text>
</comment>
<comment type="similarity">
    <text evidence="1">Belongs to the mandelate racemase/muconate lactonizing enzyme family. MenC type 1 subfamily.</text>
</comment>
<gene>
    <name evidence="1" type="primary">menC</name>
    <name type="ordered locus">ECED1_2729</name>
</gene>
<reference key="1">
    <citation type="journal article" date="2009" name="PLoS Genet.">
        <title>Organised genome dynamics in the Escherichia coli species results in highly diverse adaptive paths.</title>
        <authorList>
            <person name="Touchon M."/>
            <person name="Hoede C."/>
            <person name="Tenaillon O."/>
            <person name="Barbe V."/>
            <person name="Baeriswyl S."/>
            <person name="Bidet P."/>
            <person name="Bingen E."/>
            <person name="Bonacorsi S."/>
            <person name="Bouchier C."/>
            <person name="Bouvet O."/>
            <person name="Calteau A."/>
            <person name="Chiapello H."/>
            <person name="Clermont O."/>
            <person name="Cruveiller S."/>
            <person name="Danchin A."/>
            <person name="Diard M."/>
            <person name="Dossat C."/>
            <person name="Karoui M.E."/>
            <person name="Frapy E."/>
            <person name="Garry L."/>
            <person name="Ghigo J.M."/>
            <person name="Gilles A.M."/>
            <person name="Johnson J."/>
            <person name="Le Bouguenec C."/>
            <person name="Lescat M."/>
            <person name="Mangenot S."/>
            <person name="Martinez-Jehanne V."/>
            <person name="Matic I."/>
            <person name="Nassif X."/>
            <person name="Oztas S."/>
            <person name="Petit M.A."/>
            <person name="Pichon C."/>
            <person name="Rouy Z."/>
            <person name="Ruf C.S."/>
            <person name="Schneider D."/>
            <person name="Tourret J."/>
            <person name="Vacherie B."/>
            <person name="Vallenet D."/>
            <person name="Medigue C."/>
            <person name="Rocha E.P.C."/>
            <person name="Denamur E."/>
        </authorList>
    </citation>
    <scope>NUCLEOTIDE SEQUENCE [LARGE SCALE GENOMIC DNA]</scope>
    <source>
        <strain>ED1a</strain>
    </source>
</reference>
<organism>
    <name type="scientific">Escherichia coli O81 (strain ED1a)</name>
    <dbReference type="NCBI Taxonomy" id="585397"/>
    <lineage>
        <taxon>Bacteria</taxon>
        <taxon>Pseudomonadati</taxon>
        <taxon>Pseudomonadota</taxon>
        <taxon>Gammaproteobacteria</taxon>
        <taxon>Enterobacterales</taxon>
        <taxon>Enterobacteriaceae</taxon>
        <taxon>Escherichia</taxon>
    </lineage>
</organism>
<evidence type="ECO:0000255" key="1">
    <source>
        <dbReference type="HAMAP-Rule" id="MF_00470"/>
    </source>
</evidence>
<protein>
    <recommendedName>
        <fullName evidence="1">o-succinylbenzoate synthase</fullName>
        <shortName evidence="1">OSB synthase</shortName>
        <shortName evidence="1">OSBS</shortName>
        <ecNumber evidence="1">4.2.1.113</ecNumber>
    </recommendedName>
    <alternativeName>
        <fullName evidence="1">4-(2'-carboxyphenyl)-4-oxybutyric acid synthase</fullName>
    </alternativeName>
    <alternativeName>
        <fullName evidence="1">o-succinylbenzoic acid synthase</fullName>
    </alternativeName>
</protein>
<name>MENC_ECO81</name>
<proteinExistence type="inferred from homology"/>
<feature type="chain" id="PRO_1000135486" description="o-succinylbenzoate synthase">
    <location>
        <begin position="1"/>
        <end position="320"/>
    </location>
</feature>
<feature type="active site" description="Proton donor" evidence="1">
    <location>
        <position position="133"/>
    </location>
</feature>
<feature type="active site" description="Proton acceptor" evidence="1">
    <location>
        <position position="235"/>
    </location>
</feature>
<feature type="binding site" evidence="1">
    <location>
        <position position="161"/>
    </location>
    <ligand>
        <name>Mg(2+)</name>
        <dbReference type="ChEBI" id="CHEBI:18420"/>
    </ligand>
</feature>
<feature type="binding site" evidence="1">
    <location>
        <position position="190"/>
    </location>
    <ligand>
        <name>Mg(2+)</name>
        <dbReference type="ChEBI" id="CHEBI:18420"/>
    </ligand>
</feature>
<feature type="binding site" evidence="1">
    <location>
        <position position="213"/>
    </location>
    <ligand>
        <name>Mg(2+)</name>
        <dbReference type="ChEBI" id="CHEBI:18420"/>
    </ligand>
</feature>
<sequence>MRSAQVYRWQIPMDAGVVLRDRRLKTRDGLYVCLREGEREGWGEISPLPGFSQESWEDAQSVLLAWVNNWLAGDCELPQMPSVAFGVSCALAELADTLPQAANYRAAPLCNGDPDDLILKLADMPGEKVAKVKVGLYEAVRDGMVVNLLLEAIPDLHLRLDANRAWTPLKGQQFAKYVNPDYRHRIAFLEEPCKTRDDSRAFARETGIAIAWDESLREPDFAFVAEEGVRAVVIKPTLTGSLDKVREQVQAAHALGLTAVISSSIESSLGLTQLARIAAWLTPDTIPGLDTLDLMQAQQVRRWPGSPLPLVDVDALERLL</sequence>
<dbReference type="EC" id="4.2.1.113" evidence="1"/>
<dbReference type="EMBL" id="CU928162">
    <property type="protein sequence ID" value="CAR08760.1"/>
    <property type="molecule type" value="Genomic_DNA"/>
</dbReference>
<dbReference type="RefSeq" id="WP_001255586.1">
    <property type="nucleotide sequence ID" value="NC_011745.1"/>
</dbReference>
<dbReference type="SMR" id="B7MXE4"/>
<dbReference type="KEGG" id="ecq:ECED1_2729"/>
<dbReference type="HOGENOM" id="CLU_030273_0_1_6"/>
<dbReference type="UniPathway" id="UPA00079"/>
<dbReference type="UniPathway" id="UPA01057">
    <property type="reaction ID" value="UER00165"/>
</dbReference>
<dbReference type="Proteomes" id="UP000000748">
    <property type="component" value="Chromosome"/>
</dbReference>
<dbReference type="GO" id="GO:0000287">
    <property type="term" value="F:magnesium ion binding"/>
    <property type="evidence" value="ECO:0007669"/>
    <property type="project" value="UniProtKB-UniRule"/>
</dbReference>
<dbReference type="GO" id="GO:0043748">
    <property type="term" value="F:O-succinylbenzoate synthase activity"/>
    <property type="evidence" value="ECO:0007669"/>
    <property type="project" value="UniProtKB-EC"/>
</dbReference>
<dbReference type="GO" id="GO:0009234">
    <property type="term" value="P:menaquinone biosynthetic process"/>
    <property type="evidence" value="ECO:0007669"/>
    <property type="project" value="UniProtKB-UniRule"/>
</dbReference>
<dbReference type="CDD" id="cd03320">
    <property type="entry name" value="OSBS"/>
    <property type="match status" value="1"/>
</dbReference>
<dbReference type="FunFam" id="3.20.20.120:FF:000006">
    <property type="entry name" value="o-succinylbenzoate synthase"/>
    <property type="match status" value="1"/>
</dbReference>
<dbReference type="FunFam" id="3.30.390.10:FF:000005">
    <property type="entry name" value="o-succinylbenzoate synthase"/>
    <property type="match status" value="1"/>
</dbReference>
<dbReference type="Gene3D" id="3.20.20.120">
    <property type="entry name" value="Enolase-like C-terminal domain"/>
    <property type="match status" value="1"/>
</dbReference>
<dbReference type="Gene3D" id="3.30.390.10">
    <property type="entry name" value="Enolase-like, N-terminal domain"/>
    <property type="match status" value="1"/>
</dbReference>
<dbReference type="HAMAP" id="MF_00470">
    <property type="entry name" value="MenC_1"/>
    <property type="match status" value="1"/>
</dbReference>
<dbReference type="InterPro" id="IPR036849">
    <property type="entry name" value="Enolase-like_C_sf"/>
</dbReference>
<dbReference type="InterPro" id="IPR029017">
    <property type="entry name" value="Enolase-like_N"/>
</dbReference>
<dbReference type="InterPro" id="IPR029065">
    <property type="entry name" value="Enolase_C-like"/>
</dbReference>
<dbReference type="InterPro" id="IPR013342">
    <property type="entry name" value="Mandelate_racemase_C"/>
</dbReference>
<dbReference type="InterPro" id="IPR010196">
    <property type="entry name" value="OSB_synthase_MenC1"/>
</dbReference>
<dbReference type="InterPro" id="IPR041338">
    <property type="entry name" value="OSBS_N"/>
</dbReference>
<dbReference type="NCBIfam" id="TIGR01927">
    <property type="entry name" value="menC_gam_Gplu"/>
    <property type="match status" value="1"/>
</dbReference>
<dbReference type="NCBIfam" id="NF003473">
    <property type="entry name" value="PRK05105.1"/>
    <property type="match status" value="1"/>
</dbReference>
<dbReference type="PANTHER" id="PTHR48073:SF2">
    <property type="entry name" value="O-SUCCINYLBENZOATE SYNTHASE"/>
    <property type="match status" value="1"/>
</dbReference>
<dbReference type="PANTHER" id="PTHR48073">
    <property type="entry name" value="O-SUCCINYLBENZOATE SYNTHASE-RELATED"/>
    <property type="match status" value="1"/>
</dbReference>
<dbReference type="Pfam" id="PF21508">
    <property type="entry name" value="MenC_N"/>
    <property type="match status" value="1"/>
</dbReference>
<dbReference type="Pfam" id="PF13378">
    <property type="entry name" value="MR_MLE_C"/>
    <property type="match status" value="1"/>
</dbReference>
<dbReference type="SFLD" id="SFLDG00180">
    <property type="entry name" value="muconate_cycloisomerase"/>
    <property type="match status" value="1"/>
</dbReference>
<dbReference type="SFLD" id="SFLDF00009">
    <property type="entry name" value="o-succinylbenzoate_synthase"/>
    <property type="match status" value="1"/>
</dbReference>
<dbReference type="SMART" id="SM00922">
    <property type="entry name" value="MR_MLE"/>
    <property type="match status" value="1"/>
</dbReference>
<dbReference type="SUPFAM" id="SSF51604">
    <property type="entry name" value="Enolase C-terminal domain-like"/>
    <property type="match status" value="1"/>
</dbReference>
<dbReference type="SUPFAM" id="SSF54826">
    <property type="entry name" value="Enolase N-terminal domain-like"/>
    <property type="match status" value="1"/>
</dbReference>
<accession>B7MXE4</accession>
<keyword id="KW-0456">Lyase</keyword>
<keyword id="KW-0460">Magnesium</keyword>
<keyword id="KW-0474">Menaquinone biosynthesis</keyword>
<keyword id="KW-0479">Metal-binding</keyword>